<comment type="function">
    <text evidence="1 3">CRISPR (clustered regularly interspaced short palindromic repeat), is an adaptive immune system that provides protection against mobile genetic elements (viruses, transposable elements and conjugative plasmids). CRISPR clusters contain spacers, sequences complementary to antecedent mobile elements, and target invading nucleic acids. CRISPR clusters are transcribed and processed into CRISPR RNA (crRNA) (By similarity). The Cas4 region acts as a ssDNA exonuclease, while the Cas1 region acts as a dsDNA endonuclease. Involved in the integration of spacer DNA into the CRISPR cassette (By similarity).</text>
</comment>
<comment type="catalytic activity">
    <reaction>
        <text>exonucleolytic cleavage in the 5'- to 3'-direction to yield nucleoside 3'-phosphates.</text>
        <dbReference type="EC" id="3.1.12.1"/>
    </reaction>
</comment>
<comment type="cofactor">
    <cofactor evidence="3">
        <name>[4Fe-4S] cluster</name>
        <dbReference type="ChEBI" id="CHEBI:49883"/>
    </cofactor>
    <text evidence="3">Binds 1 [4Fe-4S] cluster per subunit.</text>
</comment>
<comment type="cofactor">
    <cofactor evidence="1">
        <name>Mg(2+)</name>
        <dbReference type="ChEBI" id="CHEBI:18420"/>
    </cofactor>
    <cofactor evidence="1">
        <name>Mn(2+)</name>
        <dbReference type="ChEBI" id="CHEBI:29035"/>
    </cofactor>
</comment>
<comment type="subunit">
    <text evidence="1">Homodimer, forms a heterotetramer with a Cas2 homodimer.</text>
</comment>
<comment type="developmental stage">
    <text evidence="4">Operon expression begins by 6 hours after starvation has initiated development and is under strong negative regulation by DevS.</text>
</comment>
<comment type="induction">
    <text evidence="4">Part of an operon going from at least MXAN_7266 to MXAN_7259 that includes a CRISPR operon with transcription continuing into the pre-crRNA locus.</text>
</comment>
<comment type="similarity">
    <text evidence="5">In the N-terminal section; belongs to the CRISPR-associated exonuclease Cas4 family.</text>
</comment>
<comment type="similarity">
    <text evidence="5">In the C-terminal section; belongs to the CRISPR-associated endonuclease Cas1 family.</text>
</comment>
<gene>
    <name type="primary">cas4-cas1</name>
    <name type="ordered locus">MXAN_7260</name>
</gene>
<sequence length="568" mass="62762">MSVVVTRYRGGGPQYMNASSTSPKPVVGEPSIRTHALHALAYCERLFYLEEVEELRVADAAVFAGRRLHVQLQEEGEHVELELASEALGLHGRVDAVKTREGTLVVYEHKRGRHAPGGDAPEAWPSDRLQAGAYALLVEERFPGAPVECRVRYHQTDTTVRFPLDAALRGAVVAAVARARLLRASRERPPVTQEERKCAKCSLAPVCLPEEERQVVGEERPRLFPEDDVRQVLHVATPGTRVGRAAEELVVTPPEGEGAPSRQPGRMVSALIAHGAVQVSAQALAYCVENDIGVHWFTSGGRYLGGLGGGAGNVHRRLRQFEALRQASVCLGLARRLVAAKLEGQLRFLLRASRGDSESRQVLASAVRDLRALLPKCEEAPSLEVLLGLEGAGAARYFGALPYLQGEDVDTRLRFEGRNRRPPRDRFNAVLGFLFGLVHREVEAAIRAVGLDVAFGFYHQPRGTAGPLGLDVMELFRVPLADMPLVASVNRRAWDADADFEVTSEHVWLSKAGRAKAIELYERRKRETWKNNVLGYSLSYARLVELEVRLLEKEWTGKPGLFATFRLR</sequence>
<keyword id="KW-0004">4Fe-4S</keyword>
<keyword id="KW-0051">Antiviral defense</keyword>
<keyword id="KW-0238">DNA-binding</keyword>
<keyword id="KW-0255">Endonuclease</keyword>
<keyword id="KW-0269">Exonuclease</keyword>
<keyword id="KW-0378">Hydrolase</keyword>
<keyword id="KW-0408">Iron</keyword>
<keyword id="KW-0411">Iron-sulfur</keyword>
<keyword id="KW-0460">Magnesium</keyword>
<keyword id="KW-0464">Manganese</keyword>
<keyword id="KW-0479">Metal-binding</keyword>
<keyword id="KW-0540">Nuclease</keyword>
<keyword id="KW-1185">Reference proteome</keyword>
<dbReference type="EC" id="3.1.-.-"/>
<dbReference type="EC" id="3.1.12.1"/>
<dbReference type="EMBL" id="CP000113">
    <property type="protein sequence ID" value="ABF90454.1"/>
    <property type="molecule type" value="Genomic_DNA"/>
</dbReference>
<dbReference type="SMR" id="Q1CW50"/>
<dbReference type="STRING" id="246197.MXAN_7260"/>
<dbReference type="EnsemblBacteria" id="ABF90454">
    <property type="protein sequence ID" value="ABF90454"/>
    <property type="gene ID" value="MXAN_7260"/>
</dbReference>
<dbReference type="KEGG" id="mxa:MXAN_7260"/>
<dbReference type="eggNOG" id="COG1468">
    <property type="taxonomic scope" value="Bacteria"/>
</dbReference>
<dbReference type="eggNOG" id="COG1518">
    <property type="taxonomic scope" value="Bacteria"/>
</dbReference>
<dbReference type="HOGENOM" id="CLU_466793_0_0_7"/>
<dbReference type="Proteomes" id="UP000002402">
    <property type="component" value="Chromosome"/>
</dbReference>
<dbReference type="GO" id="GO:0051539">
    <property type="term" value="F:4 iron, 4 sulfur cluster binding"/>
    <property type="evidence" value="ECO:0007669"/>
    <property type="project" value="UniProtKB-KW"/>
</dbReference>
<dbReference type="GO" id="GO:0003677">
    <property type="term" value="F:DNA binding"/>
    <property type="evidence" value="ECO:0007669"/>
    <property type="project" value="UniProtKB-KW"/>
</dbReference>
<dbReference type="GO" id="GO:0004520">
    <property type="term" value="F:DNA endonuclease activity"/>
    <property type="evidence" value="ECO:0007669"/>
    <property type="project" value="InterPro"/>
</dbReference>
<dbReference type="GO" id="GO:0004527">
    <property type="term" value="F:exonuclease activity"/>
    <property type="evidence" value="ECO:0007669"/>
    <property type="project" value="UniProtKB-KW"/>
</dbReference>
<dbReference type="GO" id="GO:0046872">
    <property type="term" value="F:metal ion binding"/>
    <property type="evidence" value="ECO:0007669"/>
    <property type="project" value="UniProtKB-UniRule"/>
</dbReference>
<dbReference type="GO" id="GO:0051607">
    <property type="term" value="P:defense response to virus"/>
    <property type="evidence" value="ECO:0007669"/>
    <property type="project" value="UniProtKB-UniRule"/>
</dbReference>
<dbReference type="GO" id="GO:0043571">
    <property type="term" value="P:maintenance of CRISPR repeat elements"/>
    <property type="evidence" value="ECO:0007669"/>
    <property type="project" value="UniProtKB-UniRule"/>
</dbReference>
<dbReference type="CDD" id="cd09634">
    <property type="entry name" value="Cas1_I-II-III"/>
    <property type="match status" value="1"/>
</dbReference>
<dbReference type="Gene3D" id="3.90.320.10">
    <property type="match status" value="1"/>
</dbReference>
<dbReference type="Gene3D" id="1.20.120.920">
    <property type="entry name" value="CRISPR-associated endonuclease Cas1, C-terminal domain"/>
    <property type="match status" value="1"/>
</dbReference>
<dbReference type="Gene3D" id="3.100.10.20">
    <property type="entry name" value="CRISPR-associated endonuclease Cas1, N-terminal domain"/>
    <property type="match status" value="1"/>
</dbReference>
<dbReference type="HAMAP" id="MF_01470">
    <property type="entry name" value="Cas1"/>
    <property type="match status" value="1"/>
</dbReference>
<dbReference type="InterPro" id="IPR050646">
    <property type="entry name" value="Cas1"/>
</dbReference>
<dbReference type="InterPro" id="IPR002729">
    <property type="entry name" value="CRISPR-assoc_Cas1"/>
</dbReference>
<dbReference type="InterPro" id="IPR042206">
    <property type="entry name" value="CRISPR-assoc_Cas1_C"/>
</dbReference>
<dbReference type="InterPro" id="IPR023844">
    <property type="entry name" value="CRISPR-assoc_Cas1_MYXAN"/>
</dbReference>
<dbReference type="InterPro" id="IPR042211">
    <property type="entry name" value="CRISPR-assoc_Cas1_N"/>
</dbReference>
<dbReference type="InterPro" id="IPR013343">
    <property type="entry name" value="CRISPR-assoc_prot_Cas4"/>
</dbReference>
<dbReference type="InterPro" id="IPR022765">
    <property type="entry name" value="Dna2/Cas4_DUF83"/>
</dbReference>
<dbReference type="InterPro" id="IPR011604">
    <property type="entry name" value="PDDEXK-like_dom_sf"/>
</dbReference>
<dbReference type="NCBIfam" id="TIGR00287">
    <property type="entry name" value="cas1"/>
    <property type="match status" value="1"/>
</dbReference>
<dbReference type="NCBIfam" id="TIGR03983">
    <property type="entry name" value="cas1_MYXAN"/>
    <property type="match status" value="1"/>
</dbReference>
<dbReference type="NCBIfam" id="TIGR00372">
    <property type="entry name" value="cas4"/>
    <property type="match status" value="1"/>
</dbReference>
<dbReference type="PANTHER" id="PTHR34353">
    <property type="entry name" value="CRISPR-ASSOCIATED ENDONUCLEASE CAS1 1"/>
    <property type="match status" value="1"/>
</dbReference>
<dbReference type="PANTHER" id="PTHR34353:SF2">
    <property type="entry name" value="CRISPR-ASSOCIATED ENDONUCLEASE CAS1 1"/>
    <property type="match status" value="1"/>
</dbReference>
<dbReference type="Pfam" id="PF01867">
    <property type="entry name" value="Cas_Cas1"/>
    <property type="match status" value="1"/>
</dbReference>
<dbReference type="Pfam" id="PF01930">
    <property type="entry name" value="Cas_Cas4"/>
    <property type="match status" value="1"/>
</dbReference>
<protein>
    <recommendedName>
        <fullName>CRISPR-associated exonuclease Cas4/endonuclease Cas1 fusion</fullName>
        <ecNumber>3.1.-.-</ecNumber>
        <ecNumber>3.1.12.1</ecNumber>
    </recommendedName>
</protein>
<accession>Q1CW50</accession>
<organism>
    <name type="scientific">Myxococcus xanthus (strain DK1622)</name>
    <dbReference type="NCBI Taxonomy" id="246197"/>
    <lineage>
        <taxon>Bacteria</taxon>
        <taxon>Pseudomonadati</taxon>
        <taxon>Myxococcota</taxon>
        <taxon>Myxococcia</taxon>
        <taxon>Myxococcales</taxon>
        <taxon>Cystobacterineae</taxon>
        <taxon>Myxococcaceae</taxon>
        <taxon>Myxococcus</taxon>
    </lineage>
</organism>
<feature type="chain" id="PRO_0000418218" description="CRISPR-associated exonuclease Cas4/endonuclease Cas1 fusion">
    <location>
        <begin position="1"/>
        <end position="568"/>
    </location>
</feature>
<feature type="region of interest" description="CRISPR-associated exonuclease Cas4">
    <location>
        <begin position="1"/>
        <end position="209"/>
    </location>
</feature>
<feature type="region of interest" description="CRISPR-associated endonuclease Cas1">
    <location>
        <begin position="232"/>
        <end position="568"/>
    </location>
</feature>
<feature type="binding site" evidence="3">
    <location>
        <position position="43"/>
    </location>
    <ligand>
        <name>[4Fe-4S] cluster</name>
        <dbReference type="ChEBI" id="CHEBI:49883"/>
    </ligand>
</feature>
<feature type="binding site" evidence="3">
    <location>
        <position position="95"/>
    </location>
    <ligand>
        <name>Mn(2+)</name>
        <dbReference type="ChEBI" id="CHEBI:29035"/>
        <label>1</label>
    </ligand>
</feature>
<feature type="binding site" evidence="3">
    <location>
        <position position="108"/>
    </location>
    <ligand>
        <name>Mn(2+)</name>
        <dbReference type="ChEBI" id="CHEBI:29035"/>
        <label>1</label>
    </ligand>
</feature>
<feature type="binding site" evidence="3">
    <location>
        <position position="198"/>
    </location>
    <ligand>
        <name>[4Fe-4S] cluster</name>
        <dbReference type="ChEBI" id="CHEBI:49883"/>
    </ligand>
</feature>
<feature type="binding site" evidence="3">
    <location>
        <position position="201"/>
    </location>
    <ligand>
        <name>[4Fe-4S] cluster</name>
        <dbReference type="ChEBI" id="CHEBI:49883"/>
    </ligand>
</feature>
<feature type="binding site" evidence="3">
    <location>
        <position position="207"/>
    </location>
    <ligand>
        <name>[4Fe-4S] cluster</name>
        <dbReference type="ChEBI" id="CHEBI:49883"/>
    </ligand>
</feature>
<feature type="binding site" evidence="2">
    <location>
        <position position="390"/>
    </location>
    <ligand>
        <name>Mn(2+)</name>
        <dbReference type="ChEBI" id="CHEBI:29035"/>
        <label>2</label>
    </ligand>
</feature>
<feature type="binding site" evidence="2">
    <location>
        <position position="459"/>
    </location>
    <ligand>
        <name>Mn(2+)</name>
        <dbReference type="ChEBI" id="CHEBI:29035"/>
        <label>2</label>
    </ligand>
</feature>
<feature type="binding site" evidence="2">
    <location>
        <position position="474"/>
    </location>
    <ligand>
        <name>Mn(2+)</name>
        <dbReference type="ChEBI" id="CHEBI:29035"/>
        <label>2</label>
    </ligand>
</feature>
<reference key="1">
    <citation type="journal article" date="2006" name="Proc. Natl. Acad. Sci. U.S.A.">
        <title>Evolution of sensory complexity recorded in a myxobacterial genome.</title>
        <authorList>
            <person name="Goldman B.S."/>
            <person name="Nierman W.C."/>
            <person name="Kaiser D."/>
            <person name="Slater S.C."/>
            <person name="Durkin A.S."/>
            <person name="Eisen J.A."/>
            <person name="Ronning C.M."/>
            <person name="Barbazuk W.B."/>
            <person name="Blanchard M."/>
            <person name="Field C."/>
            <person name="Halling C."/>
            <person name="Hinkle G."/>
            <person name="Iartchuk O."/>
            <person name="Kim H.S."/>
            <person name="Mackenzie C."/>
            <person name="Madupu R."/>
            <person name="Miller N."/>
            <person name="Shvartsbeyn A."/>
            <person name="Sullivan S.A."/>
            <person name="Vaudin M."/>
            <person name="Wiegand R."/>
            <person name="Kaplan H.B."/>
        </authorList>
    </citation>
    <scope>NUCLEOTIDE SEQUENCE [LARGE SCALE GENOMIC DNA]</scope>
    <source>
        <strain>DK1622</strain>
    </source>
</reference>
<reference key="2">
    <citation type="journal article" date="2007" name="J. Bacteriol.">
        <title>Regulation of dev, an operon that includes genes essential for Myxococcus xanthus development and CRISPR-associated genes and repeats.</title>
        <authorList>
            <person name="Viswanathan P."/>
            <person name="Murphy K."/>
            <person name="Julien B."/>
            <person name="Garza A.G."/>
            <person name="Kroos L."/>
        </authorList>
    </citation>
    <scope>DEVELOPMENTAL STAGE</scope>
    <scope>INDUCTION</scope>
    <scope>OPERON STRUCTURE</scope>
    <source>
        <strain>DK1622</strain>
    </source>
</reference>
<proteinExistence type="evidence at transcript level"/>
<evidence type="ECO:0000250" key="1"/>
<evidence type="ECO:0000250" key="2">
    <source>
        <dbReference type="UniProtKB" id="Q02ML7"/>
    </source>
</evidence>
<evidence type="ECO:0000250" key="3">
    <source>
        <dbReference type="UniProtKB" id="Q97TX9"/>
    </source>
</evidence>
<evidence type="ECO:0000269" key="4">
    <source>
    </source>
</evidence>
<evidence type="ECO:0000305" key="5"/>
<name>CS4F1_MYXXD</name>